<gene>
    <name evidence="1" type="primary">thiE</name>
    <name type="ordered locus">BCAH820_0420</name>
</gene>
<sequence>MSRISKAEMSKLLSVYFIMGSNNCTKDPLQVLREALEGGITIFQFREKGEGALTGEERICFAKELQAICKEYGVPFIVNDDVELALELDADGVHVGQDDEGITSVREKMGDKIVGVSTHTIEEARWAIENGADYLGVGPIFPTSTKKDTKAVQGTKGLAHFREQGITIPIVGIGGISIENTASVIEAGADGVSVISAISLAESAYESTKKLVEEVSRSL</sequence>
<protein>
    <recommendedName>
        <fullName evidence="1">Thiamine-phosphate synthase</fullName>
        <shortName evidence="1">TP synthase</shortName>
        <shortName evidence="1">TPS</shortName>
        <ecNumber evidence="1">2.5.1.3</ecNumber>
    </recommendedName>
    <alternativeName>
        <fullName evidence="1">Thiamine-phosphate pyrophosphorylase</fullName>
        <shortName evidence="1">TMP pyrophosphorylase</shortName>
        <shortName evidence="1">TMP-PPase</shortName>
    </alternativeName>
</protein>
<keyword id="KW-0460">Magnesium</keyword>
<keyword id="KW-0479">Metal-binding</keyword>
<keyword id="KW-0784">Thiamine biosynthesis</keyword>
<keyword id="KW-0808">Transferase</keyword>
<accession>B7JN72</accession>
<reference key="1">
    <citation type="submission" date="2008-10" db="EMBL/GenBank/DDBJ databases">
        <title>Genome sequence of Bacillus cereus AH820.</title>
        <authorList>
            <person name="Dodson R.J."/>
            <person name="Durkin A.S."/>
            <person name="Rosovitz M.J."/>
            <person name="Rasko D.A."/>
            <person name="Hoffmaster A."/>
            <person name="Ravel J."/>
            <person name="Sutton G."/>
        </authorList>
    </citation>
    <scope>NUCLEOTIDE SEQUENCE [LARGE SCALE GENOMIC DNA]</scope>
    <source>
        <strain>AH820</strain>
    </source>
</reference>
<comment type="function">
    <text evidence="1">Condenses 4-methyl-5-(beta-hydroxyethyl)thiazole monophosphate (THZ-P) and 2-methyl-4-amino-5-hydroxymethyl pyrimidine pyrophosphate (HMP-PP) to form thiamine monophosphate (TMP).</text>
</comment>
<comment type="catalytic activity">
    <reaction evidence="1">
        <text>2-[(2R,5Z)-2-carboxy-4-methylthiazol-5(2H)-ylidene]ethyl phosphate + 4-amino-2-methyl-5-(diphosphooxymethyl)pyrimidine + 2 H(+) = thiamine phosphate + CO2 + diphosphate</text>
        <dbReference type="Rhea" id="RHEA:47844"/>
        <dbReference type="ChEBI" id="CHEBI:15378"/>
        <dbReference type="ChEBI" id="CHEBI:16526"/>
        <dbReference type="ChEBI" id="CHEBI:33019"/>
        <dbReference type="ChEBI" id="CHEBI:37575"/>
        <dbReference type="ChEBI" id="CHEBI:57841"/>
        <dbReference type="ChEBI" id="CHEBI:62899"/>
        <dbReference type="EC" id="2.5.1.3"/>
    </reaction>
</comment>
<comment type="catalytic activity">
    <reaction evidence="1">
        <text>2-(2-carboxy-4-methylthiazol-5-yl)ethyl phosphate + 4-amino-2-methyl-5-(diphosphooxymethyl)pyrimidine + 2 H(+) = thiamine phosphate + CO2 + diphosphate</text>
        <dbReference type="Rhea" id="RHEA:47848"/>
        <dbReference type="ChEBI" id="CHEBI:15378"/>
        <dbReference type="ChEBI" id="CHEBI:16526"/>
        <dbReference type="ChEBI" id="CHEBI:33019"/>
        <dbReference type="ChEBI" id="CHEBI:37575"/>
        <dbReference type="ChEBI" id="CHEBI:57841"/>
        <dbReference type="ChEBI" id="CHEBI:62890"/>
        <dbReference type="EC" id="2.5.1.3"/>
    </reaction>
</comment>
<comment type="catalytic activity">
    <reaction evidence="1">
        <text>4-methyl-5-(2-phosphooxyethyl)-thiazole + 4-amino-2-methyl-5-(diphosphooxymethyl)pyrimidine + H(+) = thiamine phosphate + diphosphate</text>
        <dbReference type="Rhea" id="RHEA:22328"/>
        <dbReference type="ChEBI" id="CHEBI:15378"/>
        <dbReference type="ChEBI" id="CHEBI:33019"/>
        <dbReference type="ChEBI" id="CHEBI:37575"/>
        <dbReference type="ChEBI" id="CHEBI:57841"/>
        <dbReference type="ChEBI" id="CHEBI:58296"/>
        <dbReference type="EC" id="2.5.1.3"/>
    </reaction>
</comment>
<comment type="cofactor">
    <cofactor evidence="1">
        <name>Mg(2+)</name>
        <dbReference type="ChEBI" id="CHEBI:18420"/>
    </cofactor>
    <text evidence="1">Binds 1 Mg(2+) ion per subunit.</text>
</comment>
<comment type="pathway">
    <text evidence="1">Cofactor biosynthesis; thiamine diphosphate biosynthesis; thiamine phosphate from 4-amino-2-methyl-5-diphosphomethylpyrimidine and 4-methyl-5-(2-phosphoethyl)-thiazole: step 1/1.</text>
</comment>
<comment type="similarity">
    <text evidence="1">Belongs to the thiamine-phosphate synthase family.</text>
</comment>
<organism>
    <name type="scientific">Bacillus cereus (strain AH820)</name>
    <dbReference type="NCBI Taxonomy" id="405535"/>
    <lineage>
        <taxon>Bacteria</taxon>
        <taxon>Bacillati</taxon>
        <taxon>Bacillota</taxon>
        <taxon>Bacilli</taxon>
        <taxon>Bacillales</taxon>
        <taxon>Bacillaceae</taxon>
        <taxon>Bacillus</taxon>
        <taxon>Bacillus cereus group</taxon>
    </lineage>
</organism>
<name>THIE_BACC0</name>
<evidence type="ECO:0000255" key="1">
    <source>
        <dbReference type="HAMAP-Rule" id="MF_00097"/>
    </source>
</evidence>
<dbReference type="EC" id="2.5.1.3" evidence="1"/>
<dbReference type="EMBL" id="CP001283">
    <property type="protein sequence ID" value="ACK90198.1"/>
    <property type="molecule type" value="Genomic_DNA"/>
</dbReference>
<dbReference type="RefSeq" id="WP_000086982.1">
    <property type="nucleotide sequence ID" value="NC_011773.1"/>
</dbReference>
<dbReference type="SMR" id="B7JN72"/>
<dbReference type="KEGG" id="bcu:BCAH820_0420"/>
<dbReference type="HOGENOM" id="CLU_018272_3_2_9"/>
<dbReference type="UniPathway" id="UPA00060">
    <property type="reaction ID" value="UER00141"/>
</dbReference>
<dbReference type="Proteomes" id="UP000001363">
    <property type="component" value="Chromosome"/>
</dbReference>
<dbReference type="GO" id="GO:0005737">
    <property type="term" value="C:cytoplasm"/>
    <property type="evidence" value="ECO:0007669"/>
    <property type="project" value="TreeGrafter"/>
</dbReference>
<dbReference type="GO" id="GO:0000287">
    <property type="term" value="F:magnesium ion binding"/>
    <property type="evidence" value="ECO:0007669"/>
    <property type="project" value="UniProtKB-UniRule"/>
</dbReference>
<dbReference type="GO" id="GO:0004789">
    <property type="term" value="F:thiamine-phosphate diphosphorylase activity"/>
    <property type="evidence" value="ECO:0007669"/>
    <property type="project" value="UniProtKB-UniRule"/>
</dbReference>
<dbReference type="GO" id="GO:0009228">
    <property type="term" value="P:thiamine biosynthetic process"/>
    <property type="evidence" value="ECO:0007669"/>
    <property type="project" value="UniProtKB-KW"/>
</dbReference>
<dbReference type="GO" id="GO:0009229">
    <property type="term" value="P:thiamine diphosphate biosynthetic process"/>
    <property type="evidence" value="ECO:0007669"/>
    <property type="project" value="UniProtKB-UniRule"/>
</dbReference>
<dbReference type="CDD" id="cd00564">
    <property type="entry name" value="TMP_TenI"/>
    <property type="match status" value="1"/>
</dbReference>
<dbReference type="FunFam" id="3.20.20.70:FF:000096">
    <property type="entry name" value="Thiamine-phosphate synthase"/>
    <property type="match status" value="1"/>
</dbReference>
<dbReference type="Gene3D" id="3.20.20.70">
    <property type="entry name" value="Aldolase class I"/>
    <property type="match status" value="1"/>
</dbReference>
<dbReference type="HAMAP" id="MF_00097">
    <property type="entry name" value="TMP_synthase"/>
    <property type="match status" value="1"/>
</dbReference>
<dbReference type="InterPro" id="IPR013785">
    <property type="entry name" value="Aldolase_TIM"/>
</dbReference>
<dbReference type="InterPro" id="IPR036206">
    <property type="entry name" value="ThiamineP_synth_sf"/>
</dbReference>
<dbReference type="InterPro" id="IPR022998">
    <property type="entry name" value="ThiamineP_synth_TenI"/>
</dbReference>
<dbReference type="InterPro" id="IPR034291">
    <property type="entry name" value="TMP_synthase"/>
</dbReference>
<dbReference type="NCBIfam" id="TIGR00693">
    <property type="entry name" value="thiE"/>
    <property type="match status" value="1"/>
</dbReference>
<dbReference type="PANTHER" id="PTHR20857">
    <property type="entry name" value="THIAMINE-PHOSPHATE PYROPHOSPHORYLASE"/>
    <property type="match status" value="1"/>
</dbReference>
<dbReference type="PANTHER" id="PTHR20857:SF15">
    <property type="entry name" value="THIAMINE-PHOSPHATE SYNTHASE"/>
    <property type="match status" value="1"/>
</dbReference>
<dbReference type="Pfam" id="PF02581">
    <property type="entry name" value="TMP-TENI"/>
    <property type="match status" value="1"/>
</dbReference>
<dbReference type="SUPFAM" id="SSF51391">
    <property type="entry name" value="Thiamin phosphate synthase"/>
    <property type="match status" value="1"/>
</dbReference>
<feature type="chain" id="PRO_1000117295" description="Thiamine-phosphate synthase">
    <location>
        <begin position="1"/>
        <end position="219"/>
    </location>
</feature>
<feature type="binding site" evidence="1">
    <location>
        <begin position="44"/>
        <end position="48"/>
    </location>
    <ligand>
        <name>4-amino-2-methyl-5-(diphosphooxymethyl)pyrimidine</name>
        <dbReference type="ChEBI" id="CHEBI:57841"/>
    </ligand>
</feature>
<feature type="binding site" evidence="1">
    <location>
        <position position="79"/>
    </location>
    <ligand>
        <name>4-amino-2-methyl-5-(diphosphooxymethyl)pyrimidine</name>
        <dbReference type="ChEBI" id="CHEBI:57841"/>
    </ligand>
</feature>
<feature type="binding site" evidence="1">
    <location>
        <position position="80"/>
    </location>
    <ligand>
        <name>Mg(2+)</name>
        <dbReference type="ChEBI" id="CHEBI:18420"/>
    </ligand>
</feature>
<feature type="binding site" evidence="1">
    <location>
        <position position="99"/>
    </location>
    <ligand>
        <name>Mg(2+)</name>
        <dbReference type="ChEBI" id="CHEBI:18420"/>
    </ligand>
</feature>
<feature type="binding site" evidence="1">
    <location>
        <position position="117"/>
    </location>
    <ligand>
        <name>4-amino-2-methyl-5-(diphosphooxymethyl)pyrimidine</name>
        <dbReference type="ChEBI" id="CHEBI:57841"/>
    </ligand>
</feature>
<feature type="binding site" evidence="1">
    <location>
        <begin position="143"/>
        <end position="145"/>
    </location>
    <ligand>
        <name>2-[(2R,5Z)-2-carboxy-4-methylthiazol-5(2H)-ylidene]ethyl phosphate</name>
        <dbReference type="ChEBI" id="CHEBI:62899"/>
    </ligand>
</feature>
<feature type="binding site" evidence="1">
    <location>
        <position position="146"/>
    </location>
    <ligand>
        <name>4-amino-2-methyl-5-(diphosphooxymethyl)pyrimidine</name>
        <dbReference type="ChEBI" id="CHEBI:57841"/>
    </ligand>
</feature>
<feature type="binding site" evidence="1">
    <location>
        <position position="175"/>
    </location>
    <ligand>
        <name>2-[(2R,5Z)-2-carboxy-4-methylthiazol-5(2H)-ylidene]ethyl phosphate</name>
        <dbReference type="ChEBI" id="CHEBI:62899"/>
    </ligand>
</feature>
<feature type="binding site" evidence="1">
    <location>
        <begin position="195"/>
        <end position="196"/>
    </location>
    <ligand>
        <name>2-[(2R,5Z)-2-carboxy-4-methylthiazol-5(2H)-ylidene]ethyl phosphate</name>
        <dbReference type="ChEBI" id="CHEBI:62899"/>
    </ligand>
</feature>
<proteinExistence type="inferred from homology"/>